<reference key="1">
    <citation type="journal article" date="2004" name="Nat. Genet.">
        <title>Complete sequencing and characterization of 21,243 full-length human cDNAs.</title>
        <authorList>
            <person name="Ota T."/>
            <person name="Suzuki Y."/>
            <person name="Nishikawa T."/>
            <person name="Otsuki T."/>
            <person name="Sugiyama T."/>
            <person name="Irie R."/>
            <person name="Wakamatsu A."/>
            <person name="Hayashi K."/>
            <person name="Sato H."/>
            <person name="Nagai K."/>
            <person name="Kimura K."/>
            <person name="Makita H."/>
            <person name="Sekine M."/>
            <person name="Obayashi M."/>
            <person name="Nishi T."/>
            <person name="Shibahara T."/>
            <person name="Tanaka T."/>
            <person name="Ishii S."/>
            <person name="Yamamoto J."/>
            <person name="Saito K."/>
            <person name="Kawai Y."/>
            <person name="Isono Y."/>
            <person name="Nakamura Y."/>
            <person name="Nagahari K."/>
            <person name="Murakami K."/>
            <person name="Yasuda T."/>
            <person name="Iwayanagi T."/>
            <person name="Wagatsuma M."/>
            <person name="Shiratori A."/>
            <person name="Sudo H."/>
            <person name="Hosoiri T."/>
            <person name="Kaku Y."/>
            <person name="Kodaira H."/>
            <person name="Kondo H."/>
            <person name="Sugawara M."/>
            <person name="Takahashi M."/>
            <person name="Kanda K."/>
            <person name="Yokoi T."/>
            <person name="Furuya T."/>
            <person name="Kikkawa E."/>
            <person name="Omura Y."/>
            <person name="Abe K."/>
            <person name="Kamihara K."/>
            <person name="Katsuta N."/>
            <person name="Sato K."/>
            <person name="Tanikawa M."/>
            <person name="Yamazaki M."/>
            <person name="Ninomiya K."/>
            <person name="Ishibashi T."/>
            <person name="Yamashita H."/>
            <person name="Murakawa K."/>
            <person name="Fujimori K."/>
            <person name="Tanai H."/>
            <person name="Kimata M."/>
            <person name="Watanabe M."/>
            <person name="Hiraoka S."/>
            <person name="Chiba Y."/>
            <person name="Ishida S."/>
            <person name="Ono Y."/>
            <person name="Takiguchi S."/>
            <person name="Watanabe S."/>
            <person name="Yosida M."/>
            <person name="Hotuta T."/>
            <person name="Kusano J."/>
            <person name="Kanehori K."/>
            <person name="Takahashi-Fujii A."/>
            <person name="Hara H."/>
            <person name="Tanase T.-O."/>
            <person name="Nomura Y."/>
            <person name="Togiya S."/>
            <person name="Komai F."/>
            <person name="Hara R."/>
            <person name="Takeuchi K."/>
            <person name="Arita M."/>
            <person name="Imose N."/>
            <person name="Musashino K."/>
            <person name="Yuuki H."/>
            <person name="Oshima A."/>
            <person name="Sasaki N."/>
            <person name="Aotsuka S."/>
            <person name="Yoshikawa Y."/>
            <person name="Matsunawa H."/>
            <person name="Ichihara T."/>
            <person name="Shiohata N."/>
            <person name="Sano S."/>
            <person name="Moriya S."/>
            <person name="Momiyama H."/>
            <person name="Satoh N."/>
            <person name="Takami S."/>
            <person name="Terashima Y."/>
            <person name="Suzuki O."/>
            <person name="Nakagawa S."/>
            <person name="Senoh A."/>
            <person name="Mizoguchi H."/>
            <person name="Goto Y."/>
            <person name="Shimizu F."/>
            <person name="Wakebe H."/>
            <person name="Hishigaki H."/>
            <person name="Watanabe T."/>
            <person name="Sugiyama A."/>
            <person name="Takemoto M."/>
            <person name="Kawakami B."/>
            <person name="Yamazaki M."/>
            <person name="Watanabe K."/>
            <person name="Kumagai A."/>
            <person name="Itakura S."/>
            <person name="Fukuzumi Y."/>
            <person name="Fujimori Y."/>
            <person name="Komiyama M."/>
            <person name="Tashiro H."/>
            <person name="Tanigami A."/>
            <person name="Fujiwara T."/>
            <person name="Ono T."/>
            <person name="Yamada K."/>
            <person name="Fujii Y."/>
            <person name="Ozaki K."/>
            <person name="Hirao M."/>
            <person name="Ohmori Y."/>
            <person name="Kawabata A."/>
            <person name="Hikiji T."/>
            <person name="Kobatake N."/>
            <person name="Inagaki H."/>
            <person name="Ikema Y."/>
            <person name="Okamoto S."/>
            <person name="Okitani R."/>
            <person name="Kawakami T."/>
            <person name="Noguchi S."/>
            <person name="Itoh T."/>
            <person name="Shigeta K."/>
            <person name="Senba T."/>
            <person name="Matsumura K."/>
            <person name="Nakajima Y."/>
            <person name="Mizuno T."/>
            <person name="Morinaga M."/>
            <person name="Sasaki M."/>
            <person name="Togashi T."/>
            <person name="Oyama M."/>
            <person name="Hata H."/>
            <person name="Watanabe M."/>
            <person name="Komatsu T."/>
            <person name="Mizushima-Sugano J."/>
            <person name="Satoh T."/>
            <person name="Shirai Y."/>
            <person name="Takahashi Y."/>
            <person name="Nakagawa K."/>
            <person name="Okumura K."/>
            <person name="Nagase T."/>
            <person name="Nomura N."/>
            <person name="Kikuchi H."/>
            <person name="Masuho Y."/>
            <person name="Yamashita R."/>
            <person name="Nakai K."/>
            <person name="Yada T."/>
            <person name="Nakamura Y."/>
            <person name="Ohara O."/>
            <person name="Isogai T."/>
            <person name="Sugano S."/>
        </authorList>
    </citation>
    <scope>NUCLEOTIDE SEQUENCE [LARGE SCALE MRNA] (ISOFORM 2)</scope>
    <source>
        <tissue>Spleen</tissue>
    </source>
</reference>
<reference key="2">
    <citation type="journal article" date="2003" name="Nature">
        <title>The DNA sequence of human chromosome 7.</title>
        <authorList>
            <person name="Hillier L.W."/>
            <person name="Fulton R.S."/>
            <person name="Fulton L.A."/>
            <person name="Graves T.A."/>
            <person name="Pepin K.H."/>
            <person name="Wagner-McPherson C."/>
            <person name="Layman D."/>
            <person name="Maas J."/>
            <person name="Jaeger S."/>
            <person name="Walker R."/>
            <person name="Wylie K."/>
            <person name="Sekhon M."/>
            <person name="Becker M.C."/>
            <person name="O'Laughlin M.D."/>
            <person name="Schaller M.E."/>
            <person name="Fewell G.A."/>
            <person name="Delehaunty K.D."/>
            <person name="Miner T.L."/>
            <person name="Nash W.E."/>
            <person name="Cordes M."/>
            <person name="Du H."/>
            <person name="Sun H."/>
            <person name="Edwards J."/>
            <person name="Bradshaw-Cordum H."/>
            <person name="Ali J."/>
            <person name="Andrews S."/>
            <person name="Isak A."/>
            <person name="Vanbrunt A."/>
            <person name="Nguyen C."/>
            <person name="Du F."/>
            <person name="Lamar B."/>
            <person name="Courtney L."/>
            <person name="Kalicki J."/>
            <person name="Ozersky P."/>
            <person name="Bielicki L."/>
            <person name="Scott K."/>
            <person name="Holmes A."/>
            <person name="Harkins R."/>
            <person name="Harris A."/>
            <person name="Strong C.M."/>
            <person name="Hou S."/>
            <person name="Tomlinson C."/>
            <person name="Dauphin-Kohlberg S."/>
            <person name="Kozlowicz-Reilly A."/>
            <person name="Leonard S."/>
            <person name="Rohlfing T."/>
            <person name="Rock S.M."/>
            <person name="Tin-Wollam A.-M."/>
            <person name="Abbott A."/>
            <person name="Minx P."/>
            <person name="Maupin R."/>
            <person name="Strowmatt C."/>
            <person name="Latreille P."/>
            <person name="Miller N."/>
            <person name="Johnson D."/>
            <person name="Murray J."/>
            <person name="Woessner J.P."/>
            <person name="Wendl M.C."/>
            <person name="Yang S.-P."/>
            <person name="Schultz B.R."/>
            <person name="Wallis J.W."/>
            <person name="Spieth J."/>
            <person name="Bieri T.A."/>
            <person name="Nelson J.O."/>
            <person name="Berkowicz N."/>
            <person name="Wohldmann P.E."/>
            <person name="Cook L.L."/>
            <person name="Hickenbotham M.T."/>
            <person name="Eldred J."/>
            <person name="Williams D."/>
            <person name="Bedell J.A."/>
            <person name="Mardis E.R."/>
            <person name="Clifton S.W."/>
            <person name="Chissoe S.L."/>
            <person name="Marra M.A."/>
            <person name="Raymond C."/>
            <person name="Haugen E."/>
            <person name="Gillett W."/>
            <person name="Zhou Y."/>
            <person name="James R."/>
            <person name="Phelps K."/>
            <person name="Iadanoto S."/>
            <person name="Bubb K."/>
            <person name="Simms E."/>
            <person name="Levy R."/>
            <person name="Clendenning J."/>
            <person name="Kaul R."/>
            <person name="Kent W.J."/>
            <person name="Furey T.S."/>
            <person name="Baertsch R.A."/>
            <person name="Brent M.R."/>
            <person name="Keibler E."/>
            <person name="Flicek P."/>
            <person name="Bork P."/>
            <person name="Suyama M."/>
            <person name="Bailey J.A."/>
            <person name="Portnoy M.E."/>
            <person name="Torrents D."/>
            <person name="Chinwalla A.T."/>
            <person name="Gish W.R."/>
            <person name="Eddy S.R."/>
            <person name="McPherson J.D."/>
            <person name="Olson M.V."/>
            <person name="Eichler E.E."/>
            <person name="Green E.D."/>
            <person name="Waterston R.H."/>
            <person name="Wilson R.K."/>
        </authorList>
    </citation>
    <scope>NUCLEOTIDE SEQUENCE [LARGE SCALE GENOMIC DNA]</scope>
</reference>
<reference key="3">
    <citation type="journal article" date="2003" name="Science">
        <title>Human chromosome 7: DNA sequence and biology.</title>
        <authorList>
            <person name="Scherer S.W."/>
            <person name="Cheung J."/>
            <person name="MacDonald J.R."/>
            <person name="Osborne L.R."/>
            <person name="Nakabayashi K."/>
            <person name="Herbrick J.-A."/>
            <person name="Carson A.R."/>
            <person name="Parker-Katiraee L."/>
            <person name="Skaug J."/>
            <person name="Khaja R."/>
            <person name="Zhang J."/>
            <person name="Hudek A.K."/>
            <person name="Li M."/>
            <person name="Haddad M."/>
            <person name="Duggan G.E."/>
            <person name="Fernandez B.A."/>
            <person name="Kanematsu E."/>
            <person name="Gentles S."/>
            <person name="Christopoulos C.C."/>
            <person name="Choufani S."/>
            <person name="Kwasnicka D."/>
            <person name="Zheng X.H."/>
            <person name="Lai Z."/>
            <person name="Nusskern D.R."/>
            <person name="Zhang Q."/>
            <person name="Gu Z."/>
            <person name="Lu F."/>
            <person name="Zeesman S."/>
            <person name="Nowaczyk M.J."/>
            <person name="Teshima I."/>
            <person name="Chitayat D."/>
            <person name="Shuman C."/>
            <person name="Weksberg R."/>
            <person name="Zackai E.H."/>
            <person name="Grebe T.A."/>
            <person name="Cox S.R."/>
            <person name="Kirkpatrick S.J."/>
            <person name="Rahman N."/>
            <person name="Friedman J.M."/>
            <person name="Heng H.H.Q."/>
            <person name="Pelicci P.G."/>
            <person name="Lo-Coco F."/>
            <person name="Belloni E."/>
            <person name="Shaffer L.G."/>
            <person name="Pober B."/>
            <person name="Morton C.C."/>
            <person name="Gusella J.F."/>
            <person name="Bruns G.A.P."/>
            <person name="Korf B.R."/>
            <person name="Quade B.J."/>
            <person name="Ligon A.H."/>
            <person name="Ferguson H."/>
            <person name="Higgins A.W."/>
            <person name="Leach N.T."/>
            <person name="Herrick S.R."/>
            <person name="Lemyre E."/>
            <person name="Farra C.G."/>
            <person name="Kim H.-G."/>
            <person name="Summers A.M."/>
            <person name="Gripp K.W."/>
            <person name="Roberts W."/>
            <person name="Szatmari P."/>
            <person name="Winsor E.J.T."/>
            <person name="Grzeschik K.-H."/>
            <person name="Teebi A."/>
            <person name="Minassian B.A."/>
            <person name="Kere J."/>
            <person name="Armengol L."/>
            <person name="Pujana M.A."/>
            <person name="Estivill X."/>
            <person name="Wilson M.D."/>
            <person name="Koop B.F."/>
            <person name="Tosi S."/>
            <person name="Moore G.E."/>
            <person name="Boright A.P."/>
            <person name="Zlotorynski E."/>
            <person name="Kerem B."/>
            <person name="Kroisel P.M."/>
            <person name="Petek E."/>
            <person name="Oscier D.G."/>
            <person name="Mould S.J."/>
            <person name="Doehner H."/>
            <person name="Doehner K."/>
            <person name="Rommens J.M."/>
            <person name="Vincent J.B."/>
            <person name="Venter J.C."/>
            <person name="Li P.W."/>
            <person name="Mural R.J."/>
            <person name="Adams M.D."/>
            <person name="Tsui L.-C."/>
        </authorList>
    </citation>
    <scope>NUCLEOTIDE SEQUENCE [LARGE SCALE GENOMIC DNA]</scope>
</reference>
<reference key="4">
    <citation type="submission" date="2005-07" db="EMBL/GenBank/DDBJ databases">
        <authorList>
            <person name="Mural R.J."/>
            <person name="Istrail S."/>
            <person name="Sutton G.G."/>
            <person name="Florea L."/>
            <person name="Halpern A.L."/>
            <person name="Mobarry C.M."/>
            <person name="Lippert R."/>
            <person name="Walenz B."/>
            <person name="Shatkay H."/>
            <person name="Dew I."/>
            <person name="Miller J.R."/>
            <person name="Flanigan M.J."/>
            <person name="Edwards N.J."/>
            <person name="Bolanos R."/>
            <person name="Fasulo D."/>
            <person name="Halldorsson B.V."/>
            <person name="Hannenhalli S."/>
            <person name="Turner R."/>
            <person name="Yooseph S."/>
            <person name="Lu F."/>
            <person name="Nusskern D.R."/>
            <person name="Shue B.C."/>
            <person name="Zheng X.H."/>
            <person name="Zhong F."/>
            <person name="Delcher A.L."/>
            <person name="Huson D.H."/>
            <person name="Kravitz S.A."/>
            <person name="Mouchard L."/>
            <person name="Reinert K."/>
            <person name="Remington K.A."/>
            <person name="Clark A.G."/>
            <person name="Waterman M.S."/>
            <person name="Eichler E.E."/>
            <person name="Adams M.D."/>
            <person name="Hunkapiller M.W."/>
            <person name="Myers E.W."/>
            <person name="Venter J.C."/>
        </authorList>
    </citation>
    <scope>NUCLEOTIDE SEQUENCE [LARGE SCALE GENOMIC DNA]</scope>
</reference>
<reference key="5">
    <citation type="journal article" date="2004" name="Genome Res.">
        <title>The status, quality, and expansion of the NIH full-length cDNA project: the Mammalian Gene Collection (MGC).</title>
        <authorList>
            <consortium name="The MGC Project Team"/>
        </authorList>
    </citation>
    <scope>NUCLEOTIDE SEQUENCE [LARGE SCALE MRNA] (ISOFORMS 1 AND 3)</scope>
    <scope>VARIANT GLY-20</scope>
    <source>
        <tissue>Duodenum</tissue>
        <tissue>Placenta</tissue>
        <tissue>Skin</tissue>
    </source>
</reference>
<reference key="6">
    <citation type="journal article" date="2007" name="BMC Genomics">
        <title>The full-ORF clone resource of the German cDNA consortium.</title>
        <authorList>
            <person name="Bechtel S."/>
            <person name="Rosenfelder H."/>
            <person name="Duda A."/>
            <person name="Schmidt C.P."/>
            <person name="Ernst U."/>
            <person name="Wellenreuther R."/>
            <person name="Mehrle A."/>
            <person name="Schuster C."/>
            <person name="Bahr A."/>
            <person name="Bloecker H."/>
            <person name="Heubner D."/>
            <person name="Hoerlein A."/>
            <person name="Michel G."/>
            <person name="Wedler H."/>
            <person name="Koehrer K."/>
            <person name="Ottenwaelder B."/>
            <person name="Poustka A."/>
            <person name="Wiemann S."/>
            <person name="Schupp I."/>
        </authorList>
    </citation>
    <scope>NUCLEOTIDE SEQUENCE [LARGE SCALE MRNA] OF 346-821</scope>
    <source>
        <tissue>Testis</tissue>
    </source>
</reference>
<reference key="7">
    <citation type="journal article" date="2006" name="J. Biol. Chem.">
        <title>ATM activation by ionizing radiation requires BRCA1-associated BAAT1.</title>
        <authorList>
            <person name="Aglipay J.A."/>
            <person name="Martin S.A."/>
            <person name="Tawara H."/>
            <person name="Lee S.W."/>
            <person name="Ouchi T."/>
        </authorList>
    </citation>
    <scope>FUNCTION</scope>
    <scope>SUBCELLULAR LOCATION</scope>
    <scope>TISSUE SPECIFICITY</scope>
    <scope>INTERACTION WITH BRCA1 AND ATM</scope>
</reference>
<reference key="8">
    <citation type="journal article" date="2006" name="Nat. Biotechnol.">
        <title>A probability-based approach for high-throughput protein phosphorylation analysis and site localization.</title>
        <authorList>
            <person name="Beausoleil S.A."/>
            <person name="Villen J."/>
            <person name="Gerber S.A."/>
            <person name="Rush J."/>
            <person name="Gygi S.P."/>
        </authorList>
    </citation>
    <scope>PHOSPHORYLATION [LARGE SCALE ANALYSIS] AT SER-742</scope>
    <scope>IDENTIFICATION BY MASS SPECTROMETRY [LARGE SCALE ANALYSIS]</scope>
    <source>
        <tissue>Cervix carcinoma</tissue>
    </source>
</reference>
<reference key="9">
    <citation type="journal article" date="2008" name="Mol. Cell">
        <title>Kinase-selective enrichment enables quantitative phosphoproteomics of the kinome across the cell cycle.</title>
        <authorList>
            <person name="Daub H."/>
            <person name="Olsen J.V."/>
            <person name="Bairlein M."/>
            <person name="Gnad F."/>
            <person name="Oppermann F.S."/>
            <person name="Korner R."/>
            <person name="Greff Z."/>
            <person name="Keri G."/>
            <person name="Stemmann O."/>
            <person name="Mann M."/>
        </authorList>
    </citation>
    <scope>PHOSPHORYLATION [LARGE SCALE ANALYSIS] AT SER-742</scope>
    <scope>IDENTIFICATION BY MASS SPECTROMETRY [LARGE SCALE ANALYSIS]</scope>
    <source>
        <tissue>Cervix carcinoma</tissue>
    </source>
</reference>
<reference key="10">
    <citation type="journal article" date="2008" name="Proc. Natl. Acad. Sci. U.S.A.">
        <title>A quantitative atlas of mitotic phosphorylation.</title>
        <authorList>
            <person name="Dephoure N."/>
            <person name="Zhou C."/>
            <person name="Villen J."/>
            <person name="Beausoleil S.A."/>
            <person name="Bakalarski C.E."/>
            <person name="Elledge S.J."/>
            <person name="Gygi S.P."/>
        </authorList>
    </citation>
    <scope>PHOSPHORYLATION [LARGE SCALE ANALYSIS] AT SER-742</scope>
    <scope>IDENTIFICATION BY MASS SPECTROMETRY [LARGE SCALE ANALYSIS]</scope>
    <source>
        <tissue>Cervix carcinoma</tissue>
    </source>
</reference>
<reference key="11">
    <citation type="journal article" date="2009" name="Anal. Chem.">
        <title>Lys-N and trypsin cover complementary parts of the phosphoproteome in a refined SCX-based approach.</title>
        <authorList>
            <person name="Gauci S."/>
            <person name="Helbig A.O."/>
            <person name="Slijper M."/>
            <person name="Krijgsveld J."/>
            <person name="Heck A.J."/>
            <person name="Mohammed S."/>
        </authorList>
    </citation>
    <scope>IDENTIFICATION BY MASS SPECTROMETRY [LARGE SCALE ANALYSIS]</scope>
</reference>
<reference key="12">
    <citation type="journal article" date="2009" name="Sci. Signal.">
        <title>Quantitative phosphoproteomic analysis of T cell receptor signaling reveals system-wide modulation of protein-protein interactions.</title>
        <authorList>
            <person name="Mayya V."/>
            <person name="Lundgren D.H."/>
            <person name="Hwang S.-I."/>
            <person name="Rezaul K."/>
            <person name="Wu L."/>
            <person name="Eng J.K."/>
            <person name="Rodionov V."/>
            <person name="Han D.K."/>
        </authorList>
    </citation>
    <scope>IDENTIFICATION BY MASS SPECTROMETRY [LARGE SCALE ANALYSIS]</scope>
    <source>
        <tissue>Leukemic T-cell</tissue>
    </source>
</reference>
<reference key="13">
    <citation type="journal article" date="2010" name="Sci. Signal.">
        <title>Quantitative phosphoproteomics reveals widespread full phosphorylation site occupancy during mitosis.</title>
        <authorList>
            <person name="Olsen J.V."/>
            <person name="Vermeulen M."/>
            <person name="Santamaria A."/>
            <person name="Kumar C."/>
            <person name="Miller M.L."/>
            <person name="Jensen L.J."/>
            <person name="Gnad F."/>
            <person name="Cox J."/>
            <person name="Jensen T.S."/>
            <person name="Nigg E.A."/>
            <person name="Brunak S."/>
            <person name="Mann M."/>
        </authorList>
    </citation>
    <scope>PHOSPHORYLATION [LARGE SCALE ANALYSIS] AT SER-742</scope>
    <scope>IDENTIFICATION BY MASS SPECTROMETRY [LARGE SCALE ANALYSIS]</scope>
    <source>
        <tissue>Cervix carcinoma</tissue>
    </source>
</reference>
<reference key="14">
    <citation type="journal article" date="2011" name="BMC Syst. Biol.">
        <title>Initial characterization of the human central proteome.</title>
        <authorList>
            <person name="Burkard T.R."/>
            <person name="Planyavsky M."/>
            <person name="Kaupe I."/>
            <person name="Breitwieser F.P."/>
            <person name="Buerckstuemmer T."/>
            <person name="Bennett K.L."/>
            <person name="Superti-Furga G."/>
            <person name="Colinge J."/>
        </authorList>
    </citation>
    <scope>IDENTIFICATION BY MASS SPECTROMETRY [LARGE SCALE ANALYSIS]</scope>
</reference>
<reference key="15">
    <citation type="journal article" date="2011" name="Exp. Ther. Med.">
        <title>Functional interaction of BRCA1/ATM-associated BAAT1 with the DNA-PK catalytic subunit.</title>
        <authorList>
            <person name="So E.Y."/>
            <person name="Ouchi T."/>
        </authorList>
    </citation>
    <scope>FUNCTION</scope>
    <scope>INTERACTION WITH SMC1A; PRKDC AND ATM</scope>
</reference>
<reference key="16">
    <citation type="journal article" date="2013" name="J. Cancer Biol. Res.">
        <title>The potential role of BRCA1-associated ATM activator-1 (BRAT1) in regulation of mTOR.</title>
        <authorList>
            <person name="So E.Y."/>
            <person name="Ouchi T."/>
        </authorList>
    </citation>
    <scope>FUNCTION</scope>
    <scope>INTERACTION WITH MTOR AND RPTOR</scope>
</reference>
<reference key="17">
    <citation type="journal article" date="2013" name="J. Proteome Res.">
        <title>Toward a comprehensive characterization of a human cancer cell phosphoproteome.</title>
        <authorList>
            <person name="Zhou H."/>
            <person name="Di Palma S."/>
            <person name="Preisinger C."/>
            <person name="Peng M."/>
            <person name="Polat A.N."/>
            <person name="Heck A.J."/>
            <person name="Mohammed S."/>
        </authorList>
    </citation>
    <scope>PHOSPHORYLATION [LARGE SCALE ANALYSIS] AT SER-742</scope>
    <scope>IDENTIFICATION BY MASS SPECTROMETRY [LARGE SCALE ANALYSIS]</scope>
    <source>
        <tissue>Cervix carcinoma</tissue>
        <tissue>Erythroleukemia</tissue>
    </source>
</reference>
<reference key="18">
    <citation type="journal article" date="2014" name="BMC Cancer">
        <title>BRAT1 deficiency causes increased glucose metabolism and mitochondrial malfunction.</title>
        <authorList>
            <person name="So E.Y."/>
            <person name="Ouchi T."/>
        </authorList>
    </citation>
    <scope>FUNCTION</scope>
</reference>
<reference key="19">
    <citation type="journal article" date="2015" name="J. Biol. Chem.">
        <title>Nedd4 family interacting protein 1 (Ndfip1) is required for ubiquitination and nuclear trafficking of BRCA1-associated ATM activator 1 (BRAT1) during the DNA damage response.</title>
        <authorList>
            <person name="Low L.H."/>
            <person name="Chow Y.L."/>
            <person name="Li Y."/>
            <person name="Goh C.P."/>
            <person name="Putz U."/>
            <person name="Silke J."/>
            <person name="Ouchi T."/>
            <person name="Howitt J."/>
            <person name="Tan S.S."/>
        </authorList>
    </citation>
    <scope>SUBCELLULAR LOCATION</scope>
    <scope>UBIQUITINATION</scope>
    <scope>INTERACTION WITH NDFIP1</scope>
</reference>
<reference evidence="24 25 26" key="20">
    <citation type="journal article" date="2024" name="Mol. Cell">
        <title>Assembly mechanism of Integrator's RNA cleavage module.</title>
        <authorList>
            <person name="Sabath K."/>
            <person name="Qiu C."/>
            <person name="Jonas S."/>
        </authorList>
    </citation>
    <scope>STRUCTURE BY ELECTRON MICROSCOPY (3.20 ANGSTROMS) IN COMPLEX WITH ZINC; WDR73; INTS9 AND INTS11</scope>
    <scope>FUNCTION</scope>
    <scope>SUBCELLULAR LOCATION</scope>
    <scope>DOMAIN</scope>
    <scope>MUTAGENESIS OF PHE-159 AND TYR-560</scope>
    <scope>CHARACTERIZATION OF VARIANT RMFSL LYS-522</scope>
    <scope>CHARACTERIZATION OF VARIANT NEDCAS TRP-609</scope>
</reference>
<reference evidence="27" key="21">
    <citation type="journal article" date="2024" name="Mol. Cell">
        <title>Cytoplasmic binding partners of the Integrator endonuclease INTS11 and its paralog CPSF73 are required for their nuclear function.</title>
        <authorList>
            <person name="Lin M.H."/>
            <person name="Jensen M.K."/>
            <person name="Elrod N.D."/>
            <person name="Chu H.F."/>
            <person name="Haseley M."/>
            <person name="Beam A.C."/>
            <person name="Huang K.L."/>
            <person name="Chiang W."/>
            <person name="Russell W.K."/>
            <person name="Williams K."/>
            <person name="Proschel C."/>
            <person name="Wagner E.J."/>
            <person name="Tong L."/>
        </authorList>
    </citation>
    <scope>STRUCTURE BY ELECTRON MICROSCOPY (3.21 ANGSTROMS)</scope>
    <scope>FUNCTION</scope>
    <scope>DOMAIN</scope>
</reference>
<reference key="22">
    <citation type="journal article" date="2012" name="PLoS ONE">
        <title>Genetic mapping and exome sequencing identify variants associated with five novel diseases.</title>
        <authorList>
            <person name="Puffenberger E.G."/>
            <person name="Jinks R.N."/>
            <person name="Sougnez C."/>
            <person name="Cibulskis K."/>
            <person name="Willert R.A."/>
            <person name="Achilly N.P."/>
            <person name="Cassidy R.P."/>
            <person name="Fiorentini C.J."/>
            <person name="Heiken K.F."/>
            <person name="Lawrence J.J."/>
            <person name="Mahoney M.H."/>
            <person name="Miller C.J."/>
            <person name="Nair D.T."/>
            <person name="Politi K.A."/>
            <person name="Worcester K.N."/>
            <person name="Setton R.A."/>
            <person name="Dipiazza R."/>
            <person name="Sherman E.A."/>
            <person name="Eastman J.T."/>
            <person name="Francklyn C."/>
            <person name="Robey-Bond S."/>
            <person name="Rider N.L."/>
            <person name="Gabriel S."/>
            <person name="Morton D.H."/>
            <person name="Strauss K.A."/>
        </authorList>
    </citation>
    <scope>INVOLVEMENT IN RMFSL</scope>
</reference>
<reference key="23">
    <citation type="journal article" date="2014" name="J. Hum. Genet.">
        <title>Compound heterozygous BRAT1 mutations cause familial Ohtahara syndrome with hypertonia and microcephaly.</title>
        <authorList>
            <person name="Saitsu H."/>
            <person name="Yamashita S."/>
            <person name="Tanaka Y."/>
            <person name="Tsurusaki Y."/>
            <person name="Nakashima M."/>
            <person name="Miyake N."/>
            <person name="Matsumoto N."/>
        </authorList>
    </citation>
    <scope>VARIANT RMFSL PRO-59</scope>
</reference>
<reference key="24">
    <citation type="journal article" date="2015" name="Eur. J. Paediatr. Neurol.">
        <title>Lethal neonatal rigidity and multifocal seizure syndrome--report of another family with a BRAT1 mutation.</title>
        <authorList>
            <person name="Straussberg R."/>
            <person name="Ganelin-Cohen E."/>
            <person name="Goldberg-Stern H."/>
            <person name="Tzur S."/>
            <person name="Behar D.M."/>
            <person name="Smirin-Yosef P."/>
            <person name="Salmon-Divon M."/>
            <person name="Basel-Vanagaite L."/>
        </authorList>
    </citation>
    <scope>INVOLVEMENT IN RMFSL</scope>
</reference>
<reference key="25">
    <citation type="journal article" date="2015" name="Neuropediatrics">
        <title>Early-Onset Severe Encephalopathy with Epilepsy: The BRAT1 Gene Should Be Added to the List of Causes.</title>
        <authorList>
            <person name="van de Pol L.A."/>
            <person name="Wolf N.I."/>
            <person name="van Weissenbruch M.M."/>
            <person name="Stam C.J."/>
            <person name="Weiss J.M."/>
            <person name="Waisfisz Q."/>
            <person name="Kevelam S.H."/>
            <person name="Bugiani M."/>
            <person name="van de Kamp J.M."/>
            <person name="van der Knaap M.S."/>
        </authorList>
    </citation>
    <scope>INVOLVEMENT IN RMFSL</scope>
</reference>
<reference key="26">
    <citation type="journal article" date="2015" name="Pediatr. Neurol.">
        <title>Lethal Neonatal Rigidity and Multifocal Seizure Syndrome--A Misnamed Disorder?</title>
        <authorList>
            <person name="Hanes I."/>
            <person name="Kozenko M."/>
            <person name="Callen D.J."/>
        </authorList>
    </citation>
    <scope>INVOLVEMENT IN NEDCAS</scope>
    <scope>VARIANT NEDCAS TRP-609</scope>
</reference>
<reference key="27">
    <citation type="journal article" date="2016" name="Am. J. Med. Genet. A">
        <title>BRAT1-related disease--identification of a patient without early lethality.</title>
        <authorList>
            <person name="Mundy S.A."/>
            <person name="Krock B.L."/>
            <person name="Mao R."/>
            <person name="Shen J.J."/>
        </authorList>
    </citation>
    <scope>INVOLVEMENT IN NEDCAS</scope>
    <scope>VARIANT NEDCAS GLU-642</scope>
</reference>
<reference key="28">
    <citation type="journal article" date="2016" name="Am. J. Med. Genet. A">
        <title>BRAT1 mutations present with a spectrum of clinical severity.</title>
        <authorList>
            <person name="Srivastava S."/>
            <person name="Olson H.E."/>
            <person name="Cohen J.S."/>
            <person name="Gubbels C.S."/>
            <person name="Lincoln S."/>
            <person name="Davis B.T."/>
            <person name="Shahmirzadi L."/>
            <person name="Gupta S."/>
            <person name="Picker J."/>
            <person name="Yu T.W."/>
            <person name="Miller D.T."/>
            <person name="Soul J.S."/>
            <person name="Poretti A."/>
            <person name="Naidu S."/>
        </authorList>
    </citation>
    <scope>INVOLVEMENT IN NEDCAS</scope>
    <scope>VARIANT RMFSL PRO-140</scope>
    <scope>VARIANT NEDCAS PRO-140</scope>
</reference>
<reference key="29">
    <citation type="journal article" date="2016" name="Eur. J. Paediatr. Neurol.">
        <title>Mutations in BRAT1 cause autosomal recessive progressive encephalopathy: Report of a Spanish patient.</title>
        <authorList>
            <person name="Fernandez-Jaen A."/>
            <person name="Alvarez S."/>
            <person name="So E.Y."/>
            <person name="Ouchi T."/>
            <person name="Jimenez de la Pena M."/>
            <person name="Duat A."/>
            <person name="Fernandez-Mayoralas D.M."/>
            <person name="Fernandez-Perrone A.L."/>
            <person name="Albert J."/>
            <person name="Calleja-Perez B."/>
        </authorList>
    </citation>
    <scope>VARIANT RMFSL LYS-522</scope>
</reference>
<protein>
    <recommendedName>
        <fullName evidence="22">Integrator complex assembly factor BRAT1</fullName>
    </recommendedName>
    <alternativeName>
        <fullName evidence="21">BRCA1-associated ATM activator 1</fullName>
    </alternativeName>
    <alternativeName>
        <fullName evidence="20">BRCA1-associated protein required for ATM activation protein 1</fullName>
    </alternativeName>
</protein>
<organism>
    <name type="scientific">Homo sapiens</name>
    <name type="common">Human</name>
    <dbReference type="NCBI Taxonomy" id="9606"/>
    <lineage>
        <taxon>Eukaryota</taxon>
        <taxon>Metazoa</taxon>
        <taxon>Chordata</taxon>
        <taxon>Craniata</taxon>
        <taxon>Vertebrata</taxon>
        <taxon>Euteleostomi</taxon>
        <taxon>Mammalia</taxon>
        <taxon>Eutheria</taxon>
        <taxon>Euarchontoglires</taxon>
        <taxon>Primates</taxon>
        <taxon>Haplorrhini</taxon>
        <taxon>Catarrhini</taxon>
        <taxon>Hominidae</taxon>
        <taxon>Homo</taxon>
    </lineage>
</organism>
<proteinExistence type="evidence at protein level"/>
<name>BRAT1_HUMAN</name>
<gene>
    <name evidence="21 23" type="primary">BRAT1</name>
    <name evidence="20" type="synonym">BAAT1</name>
    <name evidence="23" type="synonym">C7orf27</name>
</gene>
<evidence type="ECO:0000256" key="1">
    <source>
        <dbReference type="SAM" id="MobiDB-lite"/>
    </source>
</evidence>
<evidence type="ECO:0000269" key="2">
    <source>
    </source>
</evidence>
<evidence type="ECO:0000269" key="3">
    <source>
    </source>
</evidence>
<evidence type="ECO:0000269" key="4">
    <source>
    </source>
</evidence>
<evidence type="ECO:0000269" key="5">
    <source>
    </source>
</evidence>
<evidence type="ECO:0000269" key="6">
    <source>
    </source>
</evidence>
<evidence type="ECO:0000269" key="7">
    <source>
    </source>
</evidence>
<evidence type="ECO:0000269" key="8">
    <source>
    </source>
</evidence>
<evidence type="ECO:0000269" key="9">
    <source>
    </source>
</evidence>
<evidence type="ECO:0000269" key="10">
    <source>
    </source>
</evidence>
<evidence type="ECO:0000269" key="11">
    <source>
    </source>
</evidence>
<evidence type="ECO:0000269" key="12">
    <source>
    </source>
</evidence>
<evidence type="ECO:0000269" key="13">
    <source>
    </source>
</evidence>
<evidence type="ECO:0000269" key="14">
    <source>
    </source>
</evidence>
<evidence type="ECO:0000269" key="15">
    <source>
    </source>
</evidence>
<evidence type="ECO:0000269" key="16">
    <source>
    </source>
</evidence>
<evidence type="ECO:0000269" key="17">
    <source>
    </source>
</evidence>
<evidence type="ECO:0000303" key="18">
    <source>
    </source>
</evidence>
<evidence type="ECO:0000303" key="19">
    <source>
    </source>
</evidence>
<evidence type="ECO:0000303" key="20">
    <source>
    </source>
</evidence>
<evidence type="ECO:0000303" key="21">
    <source>
    </source>
</evidence>
<evidence type="ECO:0000305" key="22"/>
<evidence type="ECO:0000312" key="23">
    <source>
        <dbReference type="HGNC" id="HGNC:21701"/>
    </source>
</evidence>
<evidence type="ECO:0007744" key="24">
    <source>
        <dbReference type="PDB" id="8R22"/>
    </source>
</evidence>
<evidence type="ECO:0007744" key="25">
    <source>
        <dbReference type="PDB" id="8R23"/>
    </source>
</evidence>
<evidence type="ECO:0007744" key="26">
    <source>
        <dbReference type="PDB" id="8R2D"/>
    </source>
</evidence>
<evidence type="ECO:0007744" key="27">
    <source>
        <dbReference type="PDB" id="8UIB"/>
    </source>
</evidence>
<evidence type="ECO:0007744" key="28">
    <source>
    </source>
</evidence>
<evidence type="ECO:0007744" key="29">
    <source>
    </source>
</evidence>
<evidence type="ECO:0007744" key="30">
    <source>
    </source>
</evidence>
<evidence type="ECO:0007744" key="31">
    <source>
    </source>
</evidence>
<evidence type="ECO:0007744" key="32">
    <source>
    </source>
</evidence>
<evidence type="ECO:0007829" key="33">
    <source>
        <dbReference type="PDB" id="8R23"/>
    </source>
</evidence>
<sequence>MDPECAQLLPALCAVLVDPRQPVADDTCLEKLLDWFKTVTEGESSVVLLQEHPCLVELLSHVLKVQDLSSGVLSFSLRLAGTFAAQENCFQYLQQGELLPGLFGEPGPLGRATWAVPTVRSGWIQGLRSLAQHPSALRFLADHGAVDTIFSLQGDSSLFVASAASQLLVHVLALSMRGGAEGQPCLPGGDWPACAQKIMDHVEESLCSAATPKVTQALNVLTTTFGRCQSPWTEALWVRLSPRVACLLERDPIPAAHSFVDLLLCVARSPVFSSSDGSLWETVARALSCLGPTHMGPLALGILKLEHCPQALRTQAFQVLLQPLACVLKATVQAPGPPGLLDGTADDATTVDTLLASKSSCAGLLCRTLAHLEELQPLPQRPSPWPQASLLGATVTVLRLCDGSAAPASSVGGHLCGTLAGCVRVQRAALDFLGTLSQGTGPQELVTQALAVLLECLESPGSSPTVLKKAFQATLRWLLSSPKTPGCSDLGPLIPQFLRELFPVLQKRLCHPCWEVRDSALEFLTQLSRHWGGQADFRCALLASEVPQLALQLLQDPESYVRASAVTAMGQLSSQGLHAPTSPEHAEARQSLFLELLHILSVDSEGFPRRAVMQVFTEWLRDGHADAAQDTEQFVATVLQAASRDLDWEVRAQGLELALVFLGQTLGPPRTHCPYAVALPEVAPAQPLTEALRALCHVGLFDFAFCALFDCDRPVAQKSCDLLLFLRDKIASYSSLREARGSPNTASAEATLPRWRAGEQAQPPGDQEPEAVLAMLRSLDLEGLRSTLAESSDHVEKSPQSLLQDMLATGGFLQGDEADCY</sequence>
<feature type="chain" id="PRO_0000255257" description="Integrator complex assembly factor BRAT1">
    <location>
        <begin position="1"/>
        <end position="821"/>
    </location>
</feature>
<feature type="repeat" description="HEAT 1">
    <location>
        <begin position="495"/>
        <end position="531"/>
    </location>
</feature>
<feature type="repeat" description="HEAT 2">
    <location>
        <begin position="544"/>
        <end position="576"/>
    </location>
</feature>
<feature type="region of interest" description="Required for interaction with NDFIP1" evidence="9">
    <location>
        <begin position="100"/>
        <end position="200"/>
    </location>
</feature>
<feature type="region of interest" description="Disordered" evidence="1">
    <location>
        <begin position="741"/>
        <end position="767"/>
    </location>
</feature>
<feature type="short sequence motif" description="BRAT1-like motif" evidence="16 17">
    <location>
        <begin position="819"/>
        <end position="821"/>
    </location>
</feature>
<feature type="binding site" evidence="16 17 26 27">
    <location>
        <position position="820"/>
    </location>
    <ligand>
        <name>Zn(2+)</name>
        <dbReference type="ChEBI" id="CHEBI:29105"/>
    </ligand>
</feature>
<feature type="modified residue" description="Phosphoserine" evidence="28 29 30 31 32">
    <location>
        <position position="742"/>
    </location>
</feature>
<feature type="splice variant" id="VSP_021288" description="In isoform 3." evidence="19">
    <location>
        <begin position="1"/>
        <end position="530"/>
    </location>
</feature>
<feature type="splice variant" id="VSP_021289" description="In isoform 2." evidence="18">
    <original>PVFSSSDGSLWETVARA</original>
    <variation>GPRDAAGGPGWATVFLG</variation>
    <location>
        <begin position="270"/>
        <end position="286"/>
    </location>
</feature>
<feature type="splice variant" id="VSP_021290" description="In isoform 2." evidence="18">
    <location>
        <begin position="287"/>
        <end position="821"/>
    </location>
</feature>
<feature type="splice variant" id="VSP_021291" description="In isoform 3." evidence="19">
    <original>WGGQADFRCALLASEVPQLALQLLQDPESYVRASAVTAMGQLSSQGLHAPTSPEHAEAR</original>
    <variation>MGKLRIGGPCAHCAAWEGVRAGCGPRLHVRGQPPSCTGVLLREPRSCHPTNHPHLLPVP</variation>
    <location>
        <begin position="531"/>
        <end position="589"/>
    </location>
</feature>
<feature type="sequence variant" id="VAR_031202" description="In dbSNP:rs17856488." evidence="2">
    <original>R</original>
    <variation>G</variation>
    <location>
        <position position="20"/>
    </location>
</feature>
<feature type="sequence variant" id="VAR_090245" description="In RMFSL; uncertain significance; dbSNP:rs727505363." evidence="7">
    <original>L</original>
    <variation>P</variation>
    <location>
        <position position="59"/>
    </location>
</feature>
<feature type="sequence variant" id="VAR_081168" description="In NEDCAS and RMFSL; uncertain significance; dbSNP:rs1085307958." evidence="15">
    <original>L</original>
    <variation>P</variation>
    <location>
        <position position="140"/>
    </location>
</feature>
<feature type="sequence variant" id="VAR_090246" description="In RMFSL; abolished interaction with INTS9 and INTS11; dbSNP:rs145509776." evidence="14 16">
    <original>E</original>
    <variation>K</variation>
    <location>
        <position position="522"/>
    </location>
</feature>
<feature type="sequence variant" id="VAR_081169" description="In NEDCAS; abolished interaction with INTS9 and INTS11; dbSNP:rs886039312." evidence="11 16">
    <original>R</original>
    <variation>W</variation>
    <location>
        <position position="609"/>
    </location>
</feature>
<feature type="sequence variant" id="VAR_081170" description="In NEDCAS; uncertain significance; dbSNP:rs200502048." evidence="12">
    <original>A</original>
    <variation>E</variation>
    <location>
        <position position="642"/>
    </location>
</feature>
<feature type="sequence variant" id="VAR_061594" description="In dbSNP:rs60152725.">
    <original>R</original>
    <variation>W</variation>
    <location>
        <position position="737"/>
    </location>
</feature>
<feature type="mutagenesis site" description="Decreased interaction with INTS11." evidence="16">
    <original>F</original>
    <variation>E</variation>
    <location>
        <position position="159"/>
    </location>
</feature>
<feature type="mutagenesis site" description="Decreased interaction with INTS11." evidence="16">
    <original>Y</original>
    <variation>R</variation>
    <location>
        <position position="560"/>
    </location>
</feature>
<feature type="sequence conflict" description="In Ref. 6; CAB61405." evidence="22" ref="6">
    <original>R</original>
    <variation>Q</variation>
    <location>
        <position position="644"/>
    </location>
</feature>
<feature type="helix" evidence="33">
    <location>
        <begin position="3"/>
        <end position="6"/>
    </location>
</feature>
<feature type="helix" evidence="33">
    <location>
        <begin position="9"/>
        <end position="17"/>
    </location>
</feature>
<feature type="strand" evidence="33">
    <location>
        <begin position="19"/>
        <end position="21"/>
    </location>
</feature>
<feature type="helix" evidence="33">
    <location>
        <begin position="26"/>
        <end position="42"/>
    </location>
</feature>
<feature type="helix" evidence="33">
    <location>
        <begin position="46"/>
        <end position="51"/>
    </location>
</feature>
<feature type="helix" evidence="33">
    <location>
        <begin position="55"/>
        <end position="62"/>
    </location>
</feature>
<feature type="turn" evidence="33">
    <location>
        <begin position="70"/>
        <end position="72"/>
    </location>
</feature>
<feature type="helix" evidence="33">
    <location>
        <begin position="73"/>
        <end position="83"/>
    </location>
</feature>
<feature type="helix" evidence="33">
    <location>
        <begin position="87"/>
        <end position="92"/>
    </location>
</feature>
<feature type="turn" evidence="33">
    <location>
        <begin position="93"/>
        <end position="97"/>
    </location>
</feature>
<feature type="helix" evidence="33">
    <location>
        <begin position="99"/>
        <end position="102"/>
    </location>
</feature>
<feature type="helix" evidence="33">
    <location>
        <begin position="105"/>
        <end position="109"/>
    </location>
</feature>
<feature type="turn" evidence="33">
    <location>
        <begin position="112"/>
        <end position="115"/>
    </location>
</feature>
<feature type="helix" evidence="33">
    <location>
        <begin position="117"/>
        <end position="130"/>
    </location>
</feature>
<feature type="helix" evidence="33">
    <location>
        <begin position="134"/>
        <end position="142"/>
    </location>
</feature>
<feature type="helix" evidence="33">
    <location>
        <begin position="146"/>
        <end position="152"/>
    </location>
</feature>
<feature type="helix" evidence="33">
    <location>
        <begin position="158"/>
        <end position="175"/>
    </location>
</feature>
<feature type="helix" evidence="33">
    <location>
        <begin position="193"/>
        <end position="206"/>
    </location>
</feature>
<feature type="helix" evidence="33">
    <location>
        <begin position="211"/>
        <end position="227"/>
    </location>
</feature>
<feature type="helix" evidence="33">
    <location>
        <begin position="231"/>
        <end position="245"/>
    </location>
</feature>
<feature type="turn" evidence="33">
    <location>
        <begin position="246"/>
        <end position="249"/>
    </location>
</feature>
<feature type="strand" evidence="33">
    <location>
        <begin position="250"/>
        <end position="252"/>
    </location>
</feature>
<feature type="helix" evidence="33">
    <location>
        <begin position="256"/>
        <end position="267"/>
    </location>
</feature>
<feature type="helix" evidence="33">
    <location>
        <begin position="270"/>
        <end position="273"/>
    </location>
</feature>
<feature type="helix" evidence="33">
    <location>
        <begin position="278"/>
        <end position="289"/>
    </location>
</feature>
<feature type="turn" evidence="33">
    <location>
        <begin position="292"/>
        <end position="294"/>
    </location>
</feature>
<feature type="helix" evidence="33">
    <location>
        <begin position="295"/>
        <end position="303"/>
    </location>
</feature>
<feature type="helix" evidence="33">
    <location>
        <begin position="310"/>
        <end position="320"/>
    </location>
</feature>
<feature type="helix" evidence="33">
    <location>
        <begin position="322"/>
        <end position="329"/>
    </location>
</feature>
<feature type="helix" evidence="33">
    <location>
        <begin position="348"/>
        <end position="356"/>
    </location>
</feature>
<feature type="helix" evidence="33">
    <location>
        <begin position="358"/>
        <end position="374"/>
    </location>
</feature>
<feature type="helix" evidence="33">
    <location>
        <begin position="387"/>
        <end position="402"/>
    </location>
</feature>
<feature type="strand" evidence="33">
    <location>
        <begin position="407"/>
        <end position="409"/>
    </location>
</feature>
<feature type="helix" evidence="33">
    <location>
        <begin position="410"/>
        <end position="419"/>
    </location>
</feature>
<feature type="helix" evidence="33">
    <location>
        <begin position="423"/>
        <end position="435"/>
    </location>
</feature>
<feature type="helix" evidence="33">
    <location>
        <begin position="443"/>
        <end position="457"/>
    </location>
</feature>
<feature type="helix" evidence="33">
    <location>
        <begin position="466"/>
        <end position="478"/>
    </location>
</feature>
<feature type="turn" evidence="33">
    <location>
        <begin position="491"/>
        <end position="493"/>
    </location>
</feature>
<feature type="helix" evidence="33">
    <location>
        <begin position="494"/>
        <end position="508"/>
    </location>
</feature>
<feature type="helix" evidence="33">
    <location>
        <begin position="514"/>
        <end position="530"/>
    </location>
</feature>
<feature type="helix" evidence="33">
    <location>
        <begin position="535"/>
        <end position="542"/>
    </location>
</feature>
<feature type="turn" evidence="33">
    <location>
        <begin position="543"/>
        <end position="545"/>
    </location>
</feature>
<feature type="helix" evidence="33">
    <location>
        <begin position="546"/>
        <end position="549"/>
    </location>
</feature>
<feature type="turn" evidence="33">
    <location>
        <begin position="550"/>
        <end position="555"/>
    </location>
</feature>
<feature type="helix" evidence="33">
    <location>
        <begin position="559"/>
        <end position="574"/>
    </location>
</feature>
<feature type="helix" evidence="33">
    <location>
        <begin position="593"/>
        <end position="601"/>
    </location>
</feature>
<feature type="helix" evidence="33">
    <location>
        <begin position="607"/>
        <end position="622"/>
    </location>
</feature>
<feature type="helix" evidence="33">
    <location>
        <begin position="631"/>
        <end position="643"/>
    </location>
</feature>
<feature type="helix" evidence="33">
    <location>
        <begin position="648"/>
        <end position="665"/>
    </location>
</feature>
<feature type="helix" evidence="33">
    <location>
        <begin position="688"/>
        <end position="697"/>
    </location>
</feature>
<feature type="helix" evidence="33">
    <location>
        <begin position="700"/>
        <end position="708"/>
    </location>
</feature>
<feature type="helix" evidence="33">
    <location>
        <begin position="713"/>
        <end position="732"/>
    </location>
</feature>
<feature type="helix" evidence="33">
    <location>
        <begin position="769"/>
        <end position="778"/>
    </location>
</feature>
<feature type="helix" evidence="33">
    <location>
        <begin position="782"/>
        <end position="788"/>
    </location>
</feature>
<feature type="turn" evidence="33">
    <location>
        <begin position="792"/>
        <end position="796"/>
    </location>
</feature>
<feature type="helix" evidence="33">
    <location>
        <begin position="799"/>
        <end position="807"/>
    </location>
</feature>
<feature type="sequence conflict" description="In Ref. 5; AAH40704." evidence="22" ref="5">
    <original>P</original>
    <variation>T</variation>
    <location sequence="Q6PJG6-3">
        <position position="49"/>
    </location>
</feature>
<comment type="function">
    <text evidence="3 5 6 10 16 17">Component of a multiprotein complex required for the assembly of the RNA endonuclease module of the integrator complex (PubMed:39032489, PubMed:39032490). Associates with INTS9 and INTS11 in the cytoplasm and blocks the active site of INTS11 to inhibit the endonuclease activity of INTS11 before formation of the full integrator complex (PubMed:39032489, PubMed:39032490). Following dissociation of WDR73 of the complex, BRAT1 facilitates the nuclear import of the INTS9-INTS11 heterodimer (PubMed:39032489). In the nucleus, INTS4 is integrated to the INTS9-INTS11 heterodimer and BRAT1 is released from the mature RNA endonuclease module by inositol hexakisphosphate (InsP6) (PubMed:39032489). BRAT1 is also involved in DNA damage response; activates kinases ATM, SMC1A and PRKDC by modulating their phosphorylation status following ionizing radiation (IR) stress (PubMed:16452482, PubMed:22977523). Plays a role in regulating mitochondrial function and cell proliferation (PubMed:25070371). Required for protein stability of MTOR and MTOR-related proteins, and cell cycle progress by growth factors (PubMed:25657994).</text>
</comment>
<comment type="subunit">
    <text evidence="3 5 9 10 16">Part of the multiprotein complex composed of BRAT1, WDR73, as well as integrator complex subunits INTS9 and INTS11 (PubMed:39032489). Interacts with BRCA1 and ATM (PubMed:16452482, PubMed:22977523). Interacts with MTOR and RPTOR (PubMed:25657994). Interacts with NDFIP1 (PubMed:25631046). Interacts with SMC1A and PRKDC (PubMed:22977523).</text>
</comment>
<comment type="interaction">
    <interactant intactId="EBI-10826195">
        <id>Q6PJG6</id>
    </interactant>
    <interactant intactId="EBI-495465">
        <id>Q13315</id>
        <label>ATM</label>
    </interactant>
    <organismsDiffer>false</organismsDiffer>
    <experiments>3</experiments>
</comment>
<comment type="interaction">
    <interactant intactId="EBI-10826195">
        <id>Q6PJG6</id>
    </interactant>
    <interactant intactId="EBI-349905">
        <id>P38398</id>
        <label>BRCA1</label>
    </interactant>
    <organismsDiffer>false</organismsDiffer>
    <experiments>6</experiments>
</comment>
<comment type="interaction">
    <interactant intactId="EBI-10826195">
        <id>Q6PJG6</id>
    </interactant>
    <interactant intactId="EBI-744099">
        <id>Q9H0I2</id>
        <label>ENKD1</label>
    </interactant>
    <organismsDiffer>false</organismsDiffer>
    <experiments>3</experiments>
</comment>
<comment type="interaction">
    <interactant intactId="EBI-10826195">
        <id>Q6PJG6</id>
    </interactant>
    <interactant intactId="EBI-948266">
        <id>O14901</id>
        <label>KLF11</label>
    </interactant>
    <organismsDiffer>false</organismsDiffer>
    <experiments>3</experiments>
</comment>
<comment type="interaction">
    <interactant intactId="EBI-10826195">
        <id>Q6PJG6</id>
    </interactant>
    <interactant intactId="EBI-11991020">
        <id>A6NI15</id>
        <label>MSGN1</label>
    </interactant>
    <organismsDiffer>false</organismsDiffer>
    <experiments>3</experiments>
</comment>
<comment type="interaction">
    <interactant intactId="EBI-10826195">
        <id>Q6PJG6</id>
    </interactant>
    <interactant intactId="EBI-372942">
        <id>Q13287</id>
        <label>NMI</label>
    </interactant>
    <organismsDiffer>false</organismsDiffer>
    <experiments>3</experiments>
</comment>
<comment type="interaction">
    <interactant intactId="EBI-10826195">
        <id>Q6PJG6</id>
    </interactant>
    <interactant intactId="EBI-739895">
        <id>Q8N6Y0</id>
        <label>USHBP1</label>
    </interactant>
    <organismsDiffer>false</organismsDiffer>
    <experiments>3</experiments>
</comment>
<comment type="subcellular location">
    <subcellularLocation>
        <location evidence="3 9 16">Nucleus</location>
    </subcellularLocation>
    <subcellularLocation>
        <location evidence="9 16">Cytoplasm</location>
    </subcellularLocation>
    <text evidence="3 9">Present at double strand breaks (DSBs)following ionizing radiation treatment. The ubiquitinated form localizes in the nucleus in a NDFIP1-dependent manner.</text>
</comment>
<comment type="alternative products">
    <event type="alternative splicing"/>
    <isoform>
        <id>Q6PJG6-1</id>
        <name>1</name>
        <sequence type="displayed"/>
    </isoform>
    <isoform>
        <id>Q6PJG6-2</id>
        <name>2</name>
        <sequence type="described" ref="VSP_021289 VSP_021290"/>
    </isoform>
    <isoform>
        <id>Q6PJG6-3</id>
        <name>3</name>
        <sequence type="described" ref="VSP_021288 VSP_021291"/>
    </isoform>
</comment>
<comment type="tissue specificity">
    <text evidence="3">Ubiquitously expressed.</text>
</comment>
<comment type="domain">
    <text evidence="16 17">The BRAT1-like motif mediates inhibition of the endonuclease activity of INTS11 by forming hyrogen bond and hydrophobic interactions with the active site of INTS11: Cys-820 coordinates one of the two active site zinc ions of INTS11.</text>
</comment>
<comment type="PTM">
    <text evidence="9">Ubiquitinated by NEDD4, NEDD4L and ITCH; mono- and polyubiquitinated forms are detected.</text>
</comment>
<comment type="disease" evidence="4 7 8 13 14 15 16">
    <disease id="DI-03404">
        <name>Rigidity and multifocal seizure syndrome, lethal neonatal</name>
        <acronym>RMFSL</acronym>
        <description>A lethal, neonatal, neurologic disorder characterized by episodic jerking that is apparent in utero, lack of psychomotor development, axial and limb rigidity, frequent multifocal seizures, and dysautonomia. At birth, affected individuals have small heads, overlapping cranial sutures, small or absent fontanels, and depressed frontal bones. Infants show poorly responsive focal jerks of the tongue, face and arms in a nearly continuous sequence throughout life.</description>
        <dbReference type="MIM" id="614498"/>
    </disease>
    <text>The disease is caused by variants affecting the gene represented in this entry.</text>
</comment>
<comment type="disease" evidence="11 12 15 16">
    <disease id="DI-05303">
        <name>Neurodevelopmental disorder with cerebellar atrophy and with or without seizures</name>
        <acronym>NEDCAS</acronym>
        <description>An autosomal recessive disorder characterized by psychomotor developmental delay manifesting in infancy, cerebellar atrophy, decreased myelination, and seizures in most patients. Additional features include intellectual disability, ataxia or dyspraxia, hypertonia, hyperreflexia, poor or absent speech, microcephaly, subtle dysmorphisms, and visual impairment in some patients.</description>
        <dbReference type="MIM" id="618056"/>
    </disease>
    <text>The disease is caused by variants affecting the gene represented in this entry.</text>
</comment>
<comment type="similarity">
    <text evidence="22">Belongs to the BRAT1 family.</text>
</comment>
<comment type="sequence caution" evidence="22">
    <conflict type="erroneous initiation">
        <sequence resource="EMBL-CDS" id="BAB15772"/>
    </conflict>
    <text>Extended N-terminus.</text>
</comment>
<dbReference type="EMBL" id="AK024482">
    <property type="protein sequence ID" value="BAB15772.1"/>
    <property type="status" value="ALT_INIT"/>
    <property type="molecule type" value="mRNA"/>
</dbReference>
<dbReference type="EMBL" id="AC092488">
    <property type="status" value="NOT_ANNOTATED_CDS"/>
    <property type="molecule type" value="Genomic_DNA"/>
</dbReference>
<dbReference type="EMBL" id="CH236953">
    <property type="protein sequence ID" value="EAL23957.1"/>
    <property type="molecule type" value="Genomic_DNA"/>
</dbReference>
<dbReference type="EMBL" id="CH471144">
    <property type="protein sequence ID" value="EAW87257.1"/>
    <property type="molecule type" value="Genomic_DNA"/>
</dbReference>
<dbReference type="EMBL" id="CH471144">
    <property type="protein sequence ID" value="EAW87258.1"/>
    <property type="molecule type" value="Genomic_DNA"/>
</dbReference>
<dbReference type="EMBL" id="BC007209">
    <property type="protein sequence ID" value="AAH07209.1"/>
    <property type="molecule type" value="mRNA"/>
</dbReference>
<dbReference type="EMBL" id="BC023561">
    <property type="protein sequence ID" value="AAH23561.2"/>
    <property type="molecule type" value="mRNA"/>
</dbReference>
<dbReference type="EMBL" id="BC040704">
    <property type="protein sequence ID" value="AAH40704.1"/>
    <property type="molecule type" value="mRNA"/>
</dbReference>
<dbReference type="EMBL" id="BC015632">
    <property type="protein sequence ID" value="AAH15632.2"/>
    <property type="molecule type" value="mRNA"/>
</dbReference>
<dbReference type="EMBL" id="AL133088">
    <property type="protein sequence ID" value="CAB61405.1"/>
    <property type="molecule type" value="mRNA"/>
</dbReference>
<dbReference type="CCDS" id="CCDS5334.1">
    <molecule id="Q6PJG6-1"/>
</dbReference>
<dbReference type="PIR" id="T42692">
    <property type="entry name" value="T42692"/>
</dbReference>
<dbReference type="RefSeq" id="NP_689956.2">
    <molecule id="Q6PJG6-1"/>
    <property type="nucleotide sequence ID" value="NM_152743.4"/>
</dbReference>
<dbReference type="PDB" id="4IFI">
    <property type="method" value="X-ray"/>
    <property type="resolution" value="2.20 A"/>
    <property type="chains" value="B=268-273"/>
</dbReference>
<dbReference type="PDB" id="8R22">
    <property type="method" value="EM"/>
    <property type="resolution" value="3.90 A"/>
    <property type="chains" value="A=1-821"/>
</dbReference>
<dbReference type="PDB" id="8R23">
    <property type="method" value="EM"/>
    <property type="resolution" value="3.20 A"/>
    <property type="chains" value="A=1-821"/>
</dbReference>
<dbReference type="PDB" id="8R2D">
    <property type="method" value="EM"/>
    <property type="resolution" value="3.90 A"/>
    <property type="chains" value="A=1-821"/>
</dbReference>
<dbReference type="PDB" id="8UIB">
    <property type="method" value="EM"/>
    <property type="resolution" value="3.21 A"/>
    <property type="chains" value="T=1-821"/>
</dbReference>
<dbReference type="PDBsum" id="4IFI"/>
<dbReference type="PDBsum" id="8R22"/>
<dbReference type="PDBsum" id="8R23"/>
<dbReference type="PDBsum" id="8R2D"/>
<dbReference type="PDBsum" id="8UIB"/>
<dbReference type="EMDB" id="EMD-18833"/>
<dbReference type="EMDB" id="EMD-18834"/>
<dbReference type="EMDB" id="EMD-18839"/>
<dbReference type="EMDB" id="EMD-42291"/>
<dbReference type="SMR" id="Q6PJG6"/>
<dbReference type="BioGRID" id="128767">
    <property type="interactions" value="127"/>
</dbReference>
<dbReference type="FunCoup" id="Q6PJG6">
    <property type="interactions" value="3439"/>
</dbReference>
<dbReference type="IntAct" id="Q6PJG6">
    <property type="interactions" value="67"/>
</dbReference>
<dbReference type="MINT" id="Q6PJG6"/>
<dbReference type="STRING" id="9606.ENSP00000339637"/>
<dbReference type="GlyGen" id="Q6PJG6">
    <property type="glycosylation" value="1 site, 1 O-linked glycan (1 site)"/>
</dbReference>
<dbReference type="iPTMnet" id="Q6PJG6"/>
<dbReference type="PhosphoSitePlus" id="Q6PJG6"/>
<dbReference type="BioMuta" id="BRAT1"/>
<dbReference type="DMDM" id="134047724"/>
<dbReference type="jPOST" id="Q6PJG6"/>
<dbReference type="MassIVE" id="Q6PJG6"/>
<dbReference type="PaxDb" id="9606-ENSP00000339637"/>
<dbReference type="PeptideAtlas" id="Q6PJG6"/>
<dbReference type="ProteomicsDB" id="67203">
    <molecule id="Q6PJG6-1"/>
</dbReference>
<dbReference type="ProteomicsDB" id="67204">
    <molecule id="Q6PJG6-2"/>
</dbReference>
<dbReference type="ProteomicsDB" id="67205">
    <molecule id="Q6PJG6-3"/>
</dbReference>
<dbReference type="Pumba" id="Q6PJG6"/>
<dbReference type="Antibodypedia" id="24393">
    <property type="antibodies" value="80 antibodies from 20 providers"/>
</dbReference>
<dbReference type="DNASU" id="221927"/>
<dbReference type="Ensembl" id="ENST00000340611.9">
    <molecule id="Q6PJG6-1"/>
    <property type="protein sequence ID" value="ENSP00000339637.4"/>
    <property type="gene ID" value="ENSG00000106009.16"/>
</dbReference>
<dbReference type="GeneID" id="221927"/>
<dbReference type="KEGG" id="hsa:221927"/>
<dbReference type="MANE-Select" id="ENST00000340611.9">
    <property type="protein sequence ID" value="ENSP00000339637.4"/>
    <property type="RefSeq nucleotide sequence ID" value="NM_152743.4"/>
    <property type="RefSeq protein sequence ID" value="NP_689956.2"/>
</dbReference>
<dbReference type="UCSC" id="uc003smi.4">
    <molecule id="Q6PJG6-1"/>
    <property type="organism name" value="human"/>
</dbReference>
<dbReference type="AGR" id="HGNC:21701"/>
<dbReference type="CTD" id="221927"/>
<dbReference type="DisGeNET" id="221927"/>
<dbReference type="GeneCards" id="BRAT1"/>
<dbReference type="HGNC" id="HGNC:21701">
    <property type="gene designation" value="BRAT1"/>
</dbReference>
<dbReference type="HPA" id="ENSG00000106009">
    <property type="expression patterns" value="Low tissue specificity"/>
</dbReference>
<dbReference type="MalaCards" id="BRAT1"/>
<dbReference type="MIM" id="614498">
    <property type="type" value="phenotype"/>
</dbReference>
<dbReference type="MIM" id="614506">
    <property type="type" value="gene"/>
</dbReference>
<dbReference type="MIM" id="618056">
    <property type="type" value="phenotype"/>
</dbReference>
<dbReference type="neXtProt" id="NX_Q6PJG6"/>
<dbReference type="OpenTargets" id="ENSG00000106009"/>
<dbReference type="Orphanet" id="435845">
    <property type="disease" value="Lethal neonatal spasticity-epileptic encephalopathy syndrome"/>
</dbReference>
<dbReference type="PharmGKB" id="PA134959439"/>
<dbReference type="VEuPathDB" id="HostDB:ENSG00000106009"/>
<dbReference type="eggNOG" id="ENOG502QRW9">
    <property type="taxonomic scope" value="Eukaryota"/>
</dbReference>
<dbReference type="GeneTree" id="ENSGT00390000017551"/>
<dbReference type="HOGENOM" id="CLU_018926_1_0_1"/>
<dbReference type="InParanoid" id="Q6PJG6"/>
<dbReference type="OMA" id="IQVFTEW"/>
<dbReference type="OrthoDB" id="10057956at2759"/>
<dbReference type="PAN-GO" id="Q6PJG6">
    <property type="GO annotations" value="3 GO annotations based on evolutionary models"/>
</dbReference>
<dbReference type="PhylomeDB" id="Q6PJG6"/>
<dbReference type="TreeFam" id="TF324349"/>
<dbReference type="PathwayCommons" id="Q6PJG6"/>
<dbReference type="SignaLink" id="Q6PJG6"/>
<dbReference type="BioGRID-ORCS" id="221927">
    <property type="hits" value="324 hits in 1162 CRISPR screens"/>
</dbReference>
<dbReference type="CD-CODE" id="DEE660B4">
    <property type="entry name" value="Stress granule"/>
</dbReference>
<dbReference type="ChiTaRS" id="BRAT1">
    <property type="organism name" value="human"/>
</dbReference>
<dbReference type="EvolutionaryTrace" id="Q6PJG6"/>
<dbReference type="GenomeRNAi" id="221927"/>
<dbReference type="Pharos" id="Q6PJG6">
    <property type="development level" value="Tbio"/>
</dbReference>
<dbReference type="PRO" id="PR:Q6PJG6"/>
<dbReference type="Proteomes" id="UP000005640">
    <property type="component" value="Chromosome 7"/>
</dbReference>
<dbReference type="RNAct" id="Q6PJG6">
    <property type="molecule type" value="protein"/>
</dbReference>
<dbReference type="Bgee" id="ENSG00000106009">
    <property type="expression patterns" value="Expressed in left adrenal gland cortex and 114 other cell types or tissues"/>
</dbReference>
<dbReference type="ExpressionAtlas" id="Q6PJG6">
    <property type="expression patterns" value="baseline and differential"/>
</dbReference>
<dbReference type="GO" id="GO:0005737">
    <property type="term" value="C:cytoplasm"/>
    <property type="evidence" value="ECO:0000314"/>
    <property type="project" value="UniProtKB"/>
</dbReference>
<dbReference type="GO" id="GO:0005829">
    <property type="term" value="C:cytosol"/>
    <property type="evidence" value="ECO:0000314"/>
    <property type="project" value="FlyBase"/>
</dbReference>
<dbReference type="GO" id="GO:0016020">
    <property type="term" value="C:membrane"/>
    <property type="evidence" value="ECO:0007005"/>
    <property type="project" value="UniProtKB"/>
</dbReference>
<dbReference type="GO" id="GO:0005654">
    <property type="term" value="C:nucleoplasm"/>
    <property type="evidence" value="ECO:0000314"/>
    <property type="project" value="HPA"/>
</dbReference>
<dbReference type="GO" id="GO:0005634">
    <property type="term" value="C:nucleus"/>
    <property type="evidence" value="ECO:0000314"/>
    <property type="project" value="UniProtKB"/>
</dbReference>
<dbReference type="GO" id="GO:0008428">
    <property type="term" value="F:ribonuclease inhibitor activity"/>
    <property type="evidence" value="ECO:0000314"/>
    <property type="project" value="UniProtKB"/>
</dbReference>
<dbReference type="GO" id="GO:0006915">
    <property type="term" value="P:apoptotic process"/>
    <property type="evidence" value="ECO:0000315"/>
    <property type="project" value="UniProtKB"/>
</dbReference>
<dbReference type="GO" id="GO:0016477">
    <property type="term" value="P:cell migration"/>
    <property type="evidence" value="ECO:0000315"/>
    <property type="project" value="UniProtKB"/>
</dbReference>
<dbReference type="GO" id="GO:0008283">
    <property type="term" value="P:cell population proliferation"/>
    <property type="evidence" value="ECO:0000315"/>
    <property type="project" value="UniProtKB"/>
</dbReference>
<dbReference type="GO" id="GO:0006974">
    <property type="term" value="P:DNA damage response"/>
    <property type="evidence" value="ECO:0000315"/>
    <property type="project" value="UniProtKB"/>
</dbReference>
<dbReference type="GO" id="GO:0006006">
    <property type="term" value="P:glucose metabolic process"/>
    <property type="evidence" value="ECO:0000315"/>
    <property type="project" value="UniProtKB"/>
</dbReference>
<dbReference type="GO" id="GO:0160234">
    <property type="term" value="P:integrator complex assembly"/>
    <property type="evidence" value="ECO:0000314"/>
    <property type="project" value="UniProtKB"/>
</dbReference>
<dbReference type="GO" id="GO:0051646">
    <property type="term" value="P:mitochondrion localization"/>
    <property type="evidence" value="ECO:0000315"/>
    <property type="project" value="UniProtKB"/>
</dbReference>
<dbReference type="GO" id="GO:0030307">
    <property type="term" value="P:positive regulation of cell growth"/>
    <property type="evidence" value="ECO:0000315"/>
    <property type="project" value="UniProtKB"/>
</dbReference>
<dbReference type="GO" id="GO:0001934">
    <property type="term" value="P:positive regulation of protein phosphorylation"/>
    <property type="evidence" value="ECO:0000315"/>
    <property type="project" value="UniProtKB"/>
</dbReference>
<dbReference type="GO" id="GO:0034504">
    <property type="term" value="P:protein localization to nucleus"/>
    <property type="evidence" value="ECO:0000314"/>
    <property type="project" value="UniProtKB"/>
</dbReference>
<dbReference type="GO" id="GO:0010212">
    <property type="term" value="P:response to ionizing radiation"/>
    <property type="evidence" value="ECO:0000315"/>
    <property type="project" value="UniProtKB"/>
</dbReference>
<dbReference type="FunFam" id="1.25.10.10:FF:001412">
    <property type="entry name" value="BRCA1 associated ATM activator 1"/>
    <property type="match status" value="1"/>
</dbReference>
<dbReference type="Gene3D" id="1.25.10.10">
    <property type="entry name" value="Leucine-rich Repeat Variant"/>
    <property type="match status" value="2"/>
</dbReference>
<dbReference type="IDEAL" id="IID00611"/>
<dbReference type="InterPro" id="IPR011989">
    <property type="entry name" value="ARM-like"/>
</dbReference>
<dbReference type="InterPro" id="IPR016024">
    <property type="entry name" value="ARM-type_fold"/>
</dbReference>
<dbReference type="InterPro" id="IPR038904">
    <property type="entry name" value="BRAT1"/>
</dbReference>
<dbReference type="InterPro" id="IPR000357">
    <property type="entry name" value="HEAT"/>
</dbReference>
<dbReference type="PANTHER" id="PTHR21331">
    <property type="entry name" value="BRCA1-ASSOCIATED ATM ACTIVATOR 1"/>
    <property type="match status" value="1"/>
</dbReference>
<dbReference type="PANTHER" id="PTHR21331:SF2">
    <property type="entry name" value="BRCA1-ASSOCIATED ATM ACTIVATOR 1"/>
    <property type="match status" value="1"/>
</dbReference>
<dbReference type="Pfam" id="PF02985">
    <property type="entry name" value="HEAT"/>
    <property type="match status" value="1"/>
</dbReference>
<dbReference type="SUPFAM" id="SSF48371">
    <property type="entry name" value="ARM repeat"/>
    <property type="match status" value="1"/>
</dbReference>
<accession>Q6PJG6</accession>
<accession>A4D200</accession>
<accession>C9JY24</accession>
<accession>Q8IW85</accession>
<accession>Q8IZ43</accession>
<accession>Q8WVR8</accession>
<accession>Q96IV9</accession>
<accession>Q9H7J8</accession>
<accession>Q9UFA3</accession>
<keyword id="KW-0002">3D-structure</keyword>
<keyword id="KW-0025">Alternative splicing</keyword>
<keyword id="KW-0963">Cytoplasm</keyword>
<keyword id="KW-0225">Disease variant</keyword>
<keyword id="KW-0227">DNA damage</keyword>
<keyword id="KW-0887">Epilepsy</keyword>
<keyword id="KW-0539">Nucleus</keyword>
<keyword id="KW-0597">Phosphoprotein</keyword>
<keyword id="KW-1267">Proteomics identification</keyword>
<keyword id="KW-1185">Reference proteome</keyword>
<keyword id="KW-0677">Repeat</keyword>
<keyword id="KW-0832">Ubl conjugation</keyword>